<keyword id="KW-0004">4Fe-4S</keyword>
<keyword id="KW-0408">Iron</keyword>
<keyword id="KW-0411">Iron-sulfur</keyword>
<keyword id="KW-0414">Isoprene biosynthesis</keyword>
<keyword id="KW-0479">Metal-binding</keyword>
<keyword id="KW-0560">Oxidoreductase</keyword>
<keyword id="KW-1185">Reference proteome</keyword>
<sequence>MLAPRRKTRQLMVGKVGVGSDHPISVQSMTTTKTHDINGTLQQIAQLTATGCDIVRVACPKTVDAEALPIIAKKSPIPVIADIHFQPKYIFAAIDAGCAAVRVNPGNIKEFDGRVKEVAKAAGDAGIPIRIGVNGGSLDKRILDKYHGKATPEALVESAMWEAGLFEEHGFGDIAISVKHSDPVLMVEAYRQLAEQSDYPLHLGVTEAGPKFMGTIKSSVAFGALLSQGIGDTIRVSLSADPVEEIKVGDQILQSLNLRPRKLEIVSCPSCGRAQVDVYSLAEEVTEALDGMEVPLRVAVMGCVVNGPGEARDADLGVASGNGKGQIFVKGEVIKTVPESQIVETLIEEAMRIAEEMDPEVLAAASASGMKAEVKVTK</sequence>
<organism>
    <name type="scientific">Corynebacterium glutamicum (strain ATCC 13032 / DSM 20300 / JCM 1318 / BCRC 11384 / CCUG 27702 / LMG 3730 / NBRC 12168 / NCIMB 10025 / NRRL B-2784 / 534)</name>
    <dbReference type="NCBI Taxonomy" id="196627"/>
    <lineage>
        <taxon>Bacteria</taxon>
        <taxon>Bacillati</taxon>
        <taxon>Actinomycetota</taxon>
        <taxon>Actinomycetes</taxon>
        <taxon>Mycobacteriales</taxon>
        <taxon>Corynebacteriaceae</taxon>
        <taxon>Corynebacterium</taxon>
    </lineage>
</organism>
<protein>
    <recommendedName>
        <fullName evidence="1">4-hydroxy-3-methylbut-2-en-1-yl diphosphate synthase (flavodoxin)</fullName>
        <ecNumber evidence="1">1.17.7.3</ecNumber>
    </recommendedName>
    <alternativeName>
        <fullName evidence="1">1-hydroxy-2-methyl-2-(E)-butenyl 4-diphosphate synthase</fullName>
    </alternativeName>
</protein>
<dbReference type="EC" id="1.17.7.3" evidence="1"/>
<dbReference type="EMBL" id="BA000036">
    <property type="protein sequence ID" value="BAB99407.1"/>
    <property type="molecule type" value="Genomic_DNA"/>
</dbReference>
<dbReference type="EMBL" id="BX927154">
    <property type="protein sequence ID" value="CAF20354.1"/>
    <property type="status" value="ALT_INIT"/>
    <property type="molecule type" value="Genomic_DNA"/>
</dbReference>
<dbReference type="RefSeq" id="NP_601219.1">
    <property type="nucleotide sequence ID" value="NC_003450.3"/>
</dbReference>
<dbReference type="SMR" id="Q8NP12"/>
<dbReference type="STRING" id="196627.cg2206"/>
<dbReference type="DNASU" id="1019970"/>
<dbReference type="KEGG" id="cgb:cg2206"/>
<dbReference type="KEGG" id="cgl:Cgl2014"/>
<dbReference type="PATRIC" id="fig|196627.13.peg.1952"/>
<dbReference type="eggNOG" id="COG0821">
    <property type="taxonomic scope" value="Bacteria"/>
</dbReference>
<dbReference type="HOGENOM" id="CLU_042258_0_0_11"/>
<dbReference type="OrthoDB" id="9803214at2"/>
<dbReference type="BioCyc" id="CORYNE:G18NG-11606-MONOMER"/>
<dbReference type="UniPathway" id="UPA00056">
    <property type="reaction ID" value="UER00096"/>
</dbReference>
<dbReference type="Proteomes" id="UP000000582">
    <property type="component" value="Chromosome"/>
</dbReference>
<dbReference type="Proteomes" id="UP000001009">
    <property type="component" value="Chromosome"/>
</dbReference>
<dbReference type="GO" id="GO:0051539">
    <property type="term" value="F:4 iron, 4 sulfur cluster binding"/>
    <property type="evidence" value="ECO:0007669"/>
    <property type="project" value="UniProtKB-UniRule"/>
</dbReference>
<dbReference type="GO" id="GO:0046429">
    <property type="term" value="F:4-hydroxy-3-methylbut-2-en-1-yl diphosphate synthase activity (ferredoxin)"/>
    <property type="evidence" value="ECO:0007669"/>
    <property type="project" value="UniProtKB-UniRule"/>
</dbReference>
<dbReference type="GO" id="GO:0141197">
    <property type="term" value="F:4-hydroxy-3-methylbut-2-enyl-diphosphate synthase activity (flavodoxin)"/>
    <property type="evidence" value="ECO:0007669"/>
    <property type="project" value="UniProtKB-EC"/>
</dbReference>
<dbReference type="GO" id="GO:0005506">
    <property type="term" value="F:iron ion binding"/>
    <property type="evidence" value="ECO:0007669"/>
    <property type="project" value="InterPro"/>
</dbReference>
<dbReference type="GO" id="GO:0019288">
    <property type="term" value="P:isopentenyl diphosphate biosynthetic process, methylerythritol 4-phosphate pathway"/>
    <property type="evidence" value="ECO:0007669"/>
    <property type="project" value="UniProtKB-UniRule"/>
</dbReference>
<dbReference type="GO" id="GO:0016114">
    <property type="term" value="P:terpenoid biosynthetic process"/>
    <property type="evidence" value="ECO:0007669"/>
    <property type="project" value="InterPro"/>
</dbReference>
<dbReference type="FunFam" id="3.20.20.20:FF:000001">
    <property type="entry name" value="4-hydroxy-3-methylbut-2-en-1-yl diphosphate synthase (flavodoxin)"/>
    <property type="match status" value="1"/>
</dbReference>
<dbReference type="FunFam" id="3.30.413.10:FF:000001">
    <property type="entry name" value="4-hydroxy-3-methylbut-2-en-1-yl diphosphate synthase (flavodoxin)"/>
    <property type="match status" value="1"/>
</dbReference>
<dbReference type="Gene3D" id="3.20.20.20">
    <property type="entry name" value="Dihydropteroate synthase-like"/>
    <property type="match status" value="1"/>
</dbReference>
<dbReference type="Gene3D" id="3.30.413.10">
    <property type="entry name" value="Sulfite Reductase Hemoprotein, domain 1"/>
    <property type="match status" value="1"/>
</dbReference>
<dbReference type="HAMAP" id="MF_00159">
    <property type="entry name" value="IspG"/>
    <property type="match status" value="1"/>
</dbReference>
<dbReference type="InterPro" id="IPR011005">
    <property type="entry name" value="Dihydropteroate_synth-like_sf"/>
</dbReference>
<dbReference type="InterPro" id="IPR016425">
    <property type="entry name" value="IspG_bac"/>
</dbReference>
<dbReference type="InterPro" id="IPR004588">
    <property type="entry name" value="IspG_bac-typ"/>
</dbReference>
<dbReference type="InterPro" id="IPR045854">
    <property type="entry name" value="NO2/SO3_Rdtase_4Fe4S_sf"/>
</dbReference>
<dbReference type="NCBIfam" id="TIGR00612">
    <property type="entry name" value="ispG_gcpE"/>
    <property type="match status" value="1"/>
</dbReference>
<dbReference type="NCBIfam" id="NF001540">
    <property type="entry name" value="PRK00366.1"/>
    <property type="match status" value="1"/>
</dbReference>
<dbReference type="PANTHER" id="PTHR30454">
    <property type="entry name" value="4-HYDROXY-3-METHYLBUT-2-EN-1-YL DIPHOSPHATE SYNTHASE"/>
    <property type="match status" value="1"/>
</dbReference>
<dbReference type="PANTHER" id="PTHR30454:SF0">
    <property type="entry name" value="4-HYDROXY-3-METHYLBUT-2-EN-1-YL DIPHOSPHATE SYNTHASE (FERREDOXIN), CHLOROPLASTIC"/>
    <property type="match status" value="1"/>
</dbReference>
<dbReference type="Pfam" id="PF04551">
    <property type="entry name" value="GcpE"/>
    <property type="match status" value="1"/>
</dbReference>
<dbReference type="PIRSF" id="PIRSF004640">
    <property type="entry name" value="IspG"/>
    <property type="match status" value="1"/>
</dbReference>
<dbReference type="SUPFAM" id="SSF51717">
    <property type="entry name" value="Dihydropteroate synthetase-like"/>
    <property type="match status" value="1"/>
</dbReference>
<dbReference type="SUPFAM" id="SSF56014">
    <property type="entry name" value="Nitrite and sulphite reductase 4Fe-4S domain-like"/>
    <property type="match status" value="1"/>
</dbReference>
<proteinExistence type="inferred from homology"/>
<accession>Q8NP12</accession>
<gene>
    <name evidence="1" type="primary">ispG</name>
    <name type="ordered locus">Cgl2014</name>
    <name type="ordered locus">cg2206</name>
</gene>
<evidence type="ECO:0000255" key="1">
    <source>
        <dbReference type="HAMAP-Rule" id="MF_00159"/>
    </source>
</evidence>
<evidence type="ECO:0000305" key="2"/>
<feature type="chain" id="PRO_0000190568" description="4-hydroxy-3-methylbut-2-en-1-yl diphosphate synthase (flavodoxin)">
    <location>
        <begin position="1"/>
        <end position="378"/>
    </location>
</feature>
<feature type="binding site" evidence="1">
    <location>
        <position position="268"/>
    </location>
    <ligand>
        <name>[4Fe-4S] cluster</name>
        <dbReference type="ChEBI" id="CHEBI:49883"/>
    </ligand>
</feature>
<feature type="binding site" evidence="1">
    <location>
        <position position="271"/>
    </location>
    <ligand>
        <name>[4Fe-4S] cluster</name>
        <dbReference type="ChEBI" id="CHEBI:49883"/>
    </ligand>
</feature>
<feature type="binding site" evidence="1">
    <location>
        <position position="303"/>
    </location>
    <ligand>
        <name>[4Fe-4S] cluster</name>
        <dbReference type="ChEBI" id="CHEBI:49883"/>
    </ligand>
</feature>
<feature type="binding site" evidence="1">
    <location>
        <position position="310"/>
    </location>
    <ligand>
        <name>[4Fe-4S] cluster</name>
        <dbReference type="ChEBI" id="CHEBI:49883"/>
    </ligand>
</feature>
<comment type="function">
    <text evidence="1">Converts 2C-methyl-D-erythritol 2,4-cyclodiphosphate (ME-2,4cPP) into 1-hydroxy-2-methyl-2-(E)-butenyl 4-diphosphate.</text>
</comment>
<comment type="catalytic activity">
    <reaction evidence="1">
        <text>(2E)-4-hydroxy-3-methylbut-2-enyl diphosphate + oxidized [flavodoxin] + H2O + 2 H(+) = 2-C-methyl-D-erythritol 2,4-cyclic diphosphate + reduced [flavodoxin]</text>
        <dbReference type="Rhea" id="RHEA:43604"/>
        <dbReference type="Rhea" id="RHEA-COMP:10622"/>
        <dbReference type="Rhea" id="RHEA-COMP:10623"/>
        <dbReference type="ChEBI" id="CHEBI:15377"/>
        <dbReference type="ChEBI" id="CHEBI:15378"/>
        <dbReference type="ChEBI" id="CHEBI:57618"/>
        <dbReference type="ChEBI" id="CHEBI:58210"/>
        <dbReference type="ChEBI" id="CHEBI:58483"/>
        <dbReference type="ChEBI" id="CHEBI:128753"/>
        <dbReference type="EC" id="1.17.7.3"/>
    </reaction>
</comment>
<comment type="cofactor">
    <cofactor evidence="1">
        <name>[4Fe-4S] cluster</name>
        <dbReference type="ChEBI" id="CHEBI:49883"/>
    </cofactor>
    <text evidence="1">Binds 1 [4Fe-4S] cluster.</text>
</comment>
<comment type="pathway">
    <text evidence="1">Isoprenoid biosynthesis; isopentenyl diphosphate biosynthesis via DXP pathway; isopentenyl diphosphate from 1-deoxy-D-xylulose 5-phosphate: step 5/6.</text>
</comment>
<comment type="similarity">
    <text evidence="1">Belongs to the IspG family.</text>
</comment>
<comment type="sequence caution" evidence="2">
    <conflict type="erroneous initiation">
        <sequence resource="EMBL-CDS" id="CAF20354"/>
    </conflict>
</comment>
<reference key="1">
    <citation type="journal article" date="2003" name="Appl. Microbiol. Biotechnol.">
        <title>The Corynebacterium glutamicum genome: features and impacts on biotechnological processes.</title>
        <authorList>
            <person name="Ikeda M."/>
            <person name="Nakagawa S."/>
        </authorList>
    </citation>
    <scope>NUCLEOTIDE SEQUENCE [LARGE SCALE GENOMIC DNA]</scope>
    <source>
        <strain>ATCC 13032 / DSM 20300 / JCM 1318 / BCRC 11384 / CCUG 27702 / LMG 3730 / NBRC 12168 / NCIMB 10025 / NRRL B-2784 / 534</strain>
    </source>
</reference>
<reference key="2">
    <citation type="journal article" date="2003" name="J. Biotechnol.">
        <title>The complete Corynebacterium glutamicum ATCC 13032 genome sequence and its impact on the production of L-aspartate-derived amino acids and vitamins.</title>
        <authorList>
            <person name="Kalinowski J."/>
            <person name="Bathe B."/>
            <person name="Bartels D."/>
            <person name="Bischoff N."/>
            <person name="Bott M."/>
            <person name="Burkovski A."/>
            <person name="Dusch N."/>
            <person name="Eggeling L."/>
            <person name="Eikmanns B.J."/>
            <person name="Gaigalat L."/>
            <person name="Goesmann A."/>
            <person name="Hartmann M."/>
            <person name="Huthmacher K."/>
            <person name="Kraemer R."/>
            <person name="Linke B."/>
            <person name="McHardy A.C."/>
            <person name="Meyer F."/>
            <person name="Moeckel B."/>
            <person name="Pfefferle W."/>
            <person name="Puehler A."/>
            <person name="Rey D.A."/>
            <person name="Rueckert C."/>
            <person name="Rupp O."/>
            <person name="Sahm H."/>
            <person name="Wendisch V.F."/>
            <person name="Wiegraebe I."/>
            <person name="Tauch A."/>
        </authorList>
    </citation>
    <scope>NUCLEOTIDE SEQUENCE [LARGE SCALE GENOMIC DNA]</scope>
    <source>
        <strain>ATCC 13032 / DSM 20300 / JCM 1318 / BCRC 11384 / CCUG 27702 / LMG 3730 / NBRC 12168 / NCIMB 10025 / NRRL B-2784 / 534</strain>
    </source>
</reference>
<name>ISPG_CORGL</name>